<organism>
    <name type="scientific">Pyrococcus furiosus (strain ATCC 43587 / DSM 3638 / JCM 8422 / Vc1)</name>
    <dbReference type="NCBI Taxonomy" id="186497"/>
    <lineage>
        <taxon>Archaea</taxon>
        <taxon>Methanobacteriati</taxon>
        <taxon>Methanobacteriota</taxon>
        <taxon>Thermococci</taxon>
        <taxon>Thermococcales</taxon>
        <taxon>Thermococcaceae</taxon>
        <taxon>Pyrococcus</taxon>
    </lineage>
</organism>
<dbReference type="EC" id="4.3.2.1" evidence="1"/>
<dbReference type="EMBL" id="AE009950">
    <property type="protein sequence ID" value="AAL80332.1"/>
    <property type="molecule type" value="Genomic_DNA"/>
</dbReference>
<dbReference type="RefSeq" id="WP_011011321.1">
    <property type="nucleotide sequence ID" value="NZ_CP023154.1"/>
</dbReference>
<dbReference type="SMR" id="Q8U483"/>
<dbReference type="STRING" id="186497.PF0208"/>
<dbReference type="PaxDb" id="186497-PF0208"/>
<dbReference type="GeneID" id="41711999"/>
<dbReference type="KEGG" id="pfu:PF0208"/>
<dbReference type="PATRIC" id="fig|186497.12.peg.216"/>
<dbReference type="eggNOG" id="arCOG01748">
    <property type="taxonomic scope" value="Archaea"/>
</dbReference>
<dbReference type="HOGENOM" id="CLU_027272_2_0_2"/>
<dbReference type="OrthoDB" id="27337at2157"/>
<dbReference type="PhylomeDB" id="Q8U483"/>
<dbReference type="UniPathway" id="UPA00068">
    <property type="reaction ID" value="UER00114"/>
</dbReference>
<dbReference type="Proteomes" id="UP000001013">
    <property type="component" value="Chromosome"/>
</dbReference>
<dbReference type="GO" id="GO:0005829">
    <property type="term" value="C:cytosol"/>
    <property type="evidence" value="ECO:0007669"/>
    <property type="project" value="TreeGrafter"/>
</dbReference>
<dbReference type="GO" id="GO:0004056">
    <property type="term" value="F:argininosuccinate lyase activity"/>
    <property type="evidence" value="ECO:0007669"/>
    <property type="project" value="UniProtKB-UniRule"/>
</dbReference>
<dbReference type="GO" id="GO:0042450">
    <property type="term" value="P:arginine biosynthetic process via ornithine"/>
    <property type="evidence" value="ECO:0007669"/>
    <property type="project" value="InterPro"/>
</dbReference>
<dbReference type="GO" id="GO:0006526">
    <property type="term" value="P:L-arginine biosynthetic process"/>
    <property type="evidence" value="ECO:0007669"/>
    <property type="project" value="UniProtKB-UniRule"/>
</dbReference>
<dbReference type="CDD" id="cd01359">
    <property type="entry name" value="Argininosuccinate_lyase"/>
    <property type="match status" value="1"/>
</dbReference>
<dbReference type="Gene3D" id="1.10.40.30">
    <property type="entry name" value="Fumarase/aspartase (C-terminal domain)"/>
    <property type="match status" value="1"/>
</dbReference>
<dbReference type="Gene3D" id="1.20.200.10">
    <property type="entry name" value="Fumarase/aspartase (Central domain)"/>
    <property type="match status" value="1"/>
</dbReference>
<dbReference type="Gene3D" id="1.10.275.10">
    <property type="entry name" value="Fumarase/aspartase (N-terminal domain)"/>
    <property type="match status" value="1"/>
</dbReference>
<dbReference type="HAMAP" id="MF_00006">
    <property type="entry name" value="Arg_succ_lyase"/>
    <property type="match status" value="1"/>
</dbReference>
<dbReference type="InterPro" id="IPR009049">
    <property type="entry name" value="Argininosuccinate_lyase"/>
</dbReference>
<dbReference type="InterPro" id="IPR024083">
    <property type="entry name" value="Fumarase/histidase_N"/>
</dbReference>
<dbReference type="InterPro" id="IPR000362">
    <property type="entry name" value="Fumarate_lyase_fam"/>
</dbReference>
<dbReference type="InterPro" id="IPR022761">
    <property type="entry name" value="Fumarate_lyase_N"/>
</dbReference>
<dbReference type="InterPro" id="IPR008948">
    <property type="entry name" value="L-Aspartase-like"/>
</dbReference>
<dbReference type="NCBIfam" id="TIGR00838">
    <property type="entry name" value="argH"/>
    <property type="match status" value="1"/>
</dbReference>
<dbReference type="PANTHER" id="PTHR43814">
    <property type="entry name" value="ARGININOSUCCINATE LYASE"/>
    <property type="match status" value="1"/>
</dbReference>
<dbReference type="PANTHER" id="PTHR43814:SF1">
    <property type="entry name" value="ARGININOSUCCINATE LYASE"/>
    <property type="match status" value="1"/>
</dbReference>
<dbReference type="Pfam" id="PF00206">
    <property type="entry name" value="Lyase_1"/>
    <property type="match status" value="1"/>
</dbReference>
<dbReference type="PRINTS" id="PR00145">
    <property type="entry name" value="ARGSUCLYASE"/>
</dbReference>
<dbReference type="PRINTS" id="PR00149">
    <property type="entry name" value="FUMRATELYASE"/>
</dbReference>
<dbReference type="SUPFAM" id="SSF48557">
    <property type="entry name" value="L-aspartase-like"/>
    <property type="match status" value="1"/>
</dbReference>
<proteinExistence type="inferred from homology"/>
<reference key="1">
    <citation type="journal article" date="1999" name="Genetics">
        <title>Divergence of the hyperthermophilic archaea Pyrococcus furiosus and P. horikoshii inferred from complete genomic sequences.</title>
        <authorList>
            <person name="Maeder D.L."/>
            <person name="Weiss R.B."/>
            <person name="Dunn D.M."/>
            <person name="Cherry J.L."/>
            <person name="Gonzalez J.M."/>
            <person name="DiRuggiero J."/>
            <person name="Robb F.T."/>
        </authorList>
    </citation>
    <scope>NUCLEOTIDE SEQUENCE [LARGE SCALE GENOMIC DNA]</scope>
    <source>
        <strain>ATCC 43587 / DSM 3638 / JCM 8422 / Vc1</strain>
    </source>
</reference>
<protein>
    <recommendedName>
        <fullName evidence="1">Argininosuccinate lyase</fullName>
        <shortName evidence="1">ASAL</shortName>
        <ecNumber evidence="1">4.3.2.1</ecNumber>
    </recommendedName>
    <alternativeName>
        <fullName evidence="1">Arginosuccinase</fullName>
    </alternativeName>
</protein>
<accession>Q8U483</accession>
<name>ARLY_PYRFU</name>
<sequence length="459" mass="51348">MYRKALLGSTRLDILSYISSMEEDREIVEEVIECLIAHVKGLIHSKLIPEEEGEKILKALEELRASKEALFSIEAEDIHEAIEIYLKEKLGKTGGYLPLGRSRNDHVVCALRLKAKKALVEEIGLILELRKALIKKAEENVYTLMPLFTHLQPAQPSTFAHYLSAIIEELEDITKILFSGLGIVDKSSLGAGAIGGTSVLLDRGYMGGILFSDIITNSLYATSSRTFLLYSCFLSVLISIALSRIAEDFVIFSTPNFGYIKLPNEHLSTSSMMPQKKNPVTMEVARAWAGEAIGHLVAMMSILKALPSGYNLDMQEVNKHAFALFSGTIKTLKIFVDAMKRVEVNKENMKKDCDIFPILATDYAEKIAMNTGRPYREVYMEVASIIGEHESTEKIYSELSSKYGISISLEEGIKKPVVGSPNPEDVLEFLEKAKKNVEKDEKKLEELRQNENRDNVYNP</sequence>
<gene>
    <name evidence="1" type="primary">argH</name>
    <name type="ordered locus">PF0208</name>
</gene>
<evidence type="ECO:0000255" key="1">
    <source>
        <dbReference type="HAMAP-Rule" id="MF_00006"/>
    </source>
</evidence>
<evidence type="ECO:0000256" key="2">
    <source>
        <dbReference type="SAM" id="MobiDB-lite"/>
    </source>
</evidence>
<comment type="catalytic activity">
    <reaction evidence="1">
        <text>2-(N(omega)-L-arginino)succinate = fumarate + L-arginine</text>
        <dbReference type="Rhea" id="RHEA:24020"/>
        <dbReference type="ChEBI" id="CHEBI:29806"/>
        <dbReference type="ChEBI" id="CHEBI:32682"/>
        <dbReference type="ChEBI" id="CHEBI:57472"/>
        <dbReference type="EC" id="4.3.2.1"/>
    </reaction>
</comment>
<comment type="pathway">
    <text evidence="1">Amino-acid biosynthesis; L-arginine biosynthesis; L-arginine from L-ornithine and carbamoyl phosphate: step 3/3.</text>
</comment>
<comment type="subcellular location">
    <subcellularLocation>
        <location evidence="1">Cytoplasm</location>
    </subcellularLocation>
</comment>
<comment type="similarity">
    <text evidence="1">Belongs to the lyase 1 family. Argininosuccinate lyase subfamily.</text>
</comment>
<feature type="chain" id="PRO_0000137868" description="Argininosuccinate lyase">
    <location>
        <begin position="1"/>
        <end position="459"/>
    </location>
</feature>
<feature type="region of interest" description="Disordered" evidence="2">
    <location>
        <begin position="440"/>
        <end position="459"/>
    </location>
</feature>
<keyword id="KW-0028">Amino-acid biosynthesis</keyword>
<keyword id="KW-0055">Arginine biosynthesis</keyword>
<keyword id="KW-0963">Cytoplasm</keyword>
<keyword id="KW-0456">Lyase</keyword>
<keyword id="KW-1185">Reference proteome</keyword>